<reference key="1">
    <citation type="journal article" date="2006" name="Nat. Biotechnol.">
        <title>Genome sequence of the bioplastic-producing 'Knallgas' bacterium Ralstonia eutropha H16.</title>
        <authorList>
            <person name="Pohlmann A."/>
            <person name="Fricke W.F."/>
            <person name="Reinecke F."/>
            <person name="Kusian B."/>
            <person name="Liesegang H."/>
            <person name="Cramm R."/>
            <person name="Eitinger T."/>
            <person name="Ewering C."/>
            <person name="Poetter M."/>
            <person name="Schwartz E."/>
            <person name="Strittmatter A."/>
            <person name="Voss I."/>
            <person name="Gottschalk G."/>
            <person name="Steinbuechel A."/>
            <person name="Friedrich B."/>
            <person name="Bowien B."/>
        </authorList>
    </citation>
    <scope>NUCLEOTIDE SEQUENCE [LARGE SCALE GENOMIC DNA]</scope>
    <source>
        <strain>ATCC 17699 / DSM 428 / KCTC 22496 / NCIMB 10442 / H16 / Stanier 337</strain>
    </source>
</reference>
<evidence type="ECO:0000255" key="1">
    <source>
        <dbReference type="HAMAP-Rule" id="MF_01302"/>
    </source>
</evidence>
<evidence type="ECO:0000305" key="2"/>
<dbReference type="EMBL" id="AM260479">
    <property type="protein sequence ID" value="CAJ94538.1"/>
    <property type="molecule type" value="Genomic_DNA"/>
</dbReference>
<dbReference type="RefSeq" id="WP_010812384.1">
    <property type="nucleotide sequence ID" value="NZ_CP039287.1"/>
</dbReference>
<dbReference type="SMR" id="Q0K633"/>
<dbReference type="STRING" id="381666.H16_A3470"/>
<dbReference type="GeneID" id="34310256"/>
<dbReference type="KEGG" id="reh:H16_A3470"/>
<dbReference type="eggNOG" id="COG0096">
    <property type="taxonomic scope" value="Bacteria"/>
</dbReference>
<dbReference type="HOGENOM" id="CLU_098428_0_0_4"/>
<dbReference type="OrthoDB" id="9802617at2"/>
<dbReference type="Proteomes" id="UP000008210">
    <property type="component" value="Chromosome 1"/>
</dbReference>
<dbReference type="GO" id="GO:1990904">
    <property type="term" value="C:ribonucleoprotein complex"/>
    <property type="evidence" value="ECO:0007669"/>
    <property type="project" value="UniProtKB-KW"/>
</dbReference>
<dbReference type="GO" id="GO:0005840">
    <property type="term" value="C:ribosome"/>
    <property type="evidence" value="ECO:0007669"/>
    <property type="project" value="UniProtKB-KW"/>
</dbReference>
<dbReference type="GO" id="GO:0019843">
    <property type="term" value="F:rRNA binding"/>
    <property type="evidence" value="ECO:0007669"/>
    <property type="project" value="UniProtKB-UniRule"/>
</dbReference>
<dbReference type="GO" id="GO:0003735">
    <property type="term" value="F:structural constituent of ribosome"/>
    <property type="evidence" value="ECO:0007669"/>
    <property type="project" value="InterPro"/>
</dbReference>
<dbReference type="GO" id="GO:0006412">
    <property type="term" value="P:translation"/>
    <property type="evidence" value="ECO:0007669"/>
    <property type="project" value="UniProtKB-UniRule"/>
</dbReference>
<dbReference type="FunFam" id="3.30.1370.30:FF:000002">
    <property type="entry name" value="30S ribosomal protein S8"/>
    <property type="match status" value="1"/>
</dbReference>
<dbReference type="FunFam" id="3.30.1490.10:FF:000001">
    <property type="entry name" value="30S ribosomal protein S8"/>
    <property type="match status" value="1"/>
</dbReference>
<dbReference type="Gene3D" id="3.30.1370.30">
    <property type="match status" value="1"/>
</dbReference>
<dbReference type="Gene3D" id="3.30.1490.10">
    <property type="match status" value="1"/>
</dbReference>
<dbReference type="HAMAP" id="MF_01302_B">
    <property type="entry name" value="Ribosomal_uS8_B"/>
    <property type="match status" value="1"/>
</dbReference>
<dbReference type="InterPro" id="IPR000630">
    <property type="entry name" value="Ribosomal_uS8"/>
</dbReference>
<dbReference type="InterPro" id="IPR047863">
    <property type="entry name" value="Ribosomal_uS8_CS"/>
</dbReference>
<dbReference type="InterPro" id="IPR035987">
    <property type="entry name" value="Ribosomal_uS8_sf"/>
</dbReference>
<dbReference type="NCBIfam" id="NF001109">
    <property type="entry name" value="PRK00136.1"/>
    <property type="match status" value="1"/>
</dbReference>
<dbReference type="PANTHER" id="PTHR11758">
    <property type="entry name" value="40S RIBOSOMAL PROTEIN S15A"/>
    <property type="match status" value="1"/>
</dbReference>
<dbReference type="Pfam" id="PF00410">
    <property type="entry name" value="Ribosomal_S8"/>
    <property type="match status" value="1"/>
</dbReference>
<dbReference type="SUPFAM" id="SSF56047">
    <property type="entry name" value="Ribosomal protein S8"/>
    <property type="match status" value="1"/>
</dbReference>
<dbReference type="PROSITE" id="PS00053">
    <property type="entry name" value="RIBOSOMAL_S8"/>
    <property type="match status" value="1"/>
</dbReference>
<proteinExistence type="inferred from homology"/>
<comment type="function">
    <text evidence="1">One of the primary rRNA binding proteins, it binds directly to 16S rRNA central domain where it helps coordinate assembly of the platform of the 30S subunit.</text>
</comment>
<comment type="subunit">
    <text evidence="1">Part of the 30S ribosomal subunit. Contacts proteins S5 and S12.</text>
</comment>
<comment type="similarity">
    <text evidence="1">Belongs to the universal ribosomal protein uS8 family.</text>
</comment>
<keyword id="KW-1185">Reference proteome</keyword>
<keyword id="KW-0687">Ribonucleoprotein</keyword>
<keyword id="KW-0689">Ribosomal protein</keyword>
<keyword id="KW-0694">RNA-binding</keyword>
<keyword id="KW-0699">rRNA-binding</keyword>
<protein>
    <recommendedName>
        <fullName evidence="1">Small ribosomal subunit protein uS8</fullName>
    </recommendedName>
    <alternativeName>
        <fullName evidence="2">30S ribosomal protein S8</fullName>
    </alternativeName>
</protein>
<gene>
    <name evidence="1" type="primary">rpsH</name>
    <name type="ordered locus">H16_A3470</name>
</gene>
<accession>Q0K633</accession>
<feature type="chain" id="PRO_0000290908" description="Small ribosomal subunit protein uS8">
    <location>
        <begin position="1"/>
        <end position="131"/>
    </location>
</feature>
<organism>
    <name type="scientific">Cupriavidus necator (strain ATCC 17699 / DSM 428 / KCTC 22496 / NCIMB 10442 / H16 / Stanier 337)</name>
    <name type="common">Ralstonia eutropha</name>
    <dbReference type="NCBI Taxonomy" id="381666"/>
    <lineage>
        <taxon>Bacteria</taxon>
        <taxon>Pseudomonadati</taxon>
        <taxon>Pseudomonadota</taxon>
        <taxon>Betaproteobacteria</taxon>
        <taxon>Burkholderiales</taxon>
        <taxon>Burkholderiaceae</taxon>
        <taxon>Cupriavidus</taxon>
    </lineage>
</organism>
<name>RS8_CUPNH</name>
<sequence>MSMSDPIADMLTRIRNAQGVQKASVVMPSSKLKVAIAKVLKDEGYIDDYAVQEDGGKAQLSIGLKYYAGRPVIERIERVSKPGLRVYKGRSDIPQVMNGLGVAIISTPQGLMTDRKARATGVGGEVLCYVA</sequence>